<protein>
    <recommendedName>
        <fullName evidence="1">Teichoic acids export ATP-binding protein TagH</fullName>
        <ecNumber evidence="1">7.5.2.4</ecNumber>
    </recommendedName>
</protein>
<comment type="function">
    <text evidence="1">Part of the ABC transporter complex TagGH involved in teichoic acids export. Responsible for energy coupling to the transport system.</text>
</comment>
<comment type="catalytic activity">
    <reaction evidence="1">
        <text>ATP + H2O + teichoic acidSide 1 = ADP + phosphate + teichoic acidSide 2.</text>
        <dbReference type="EC" id="7.5.2.4"/>
    </reaction>
</comment>
<comment type="subunit">
    <text evidence="1">The complex is composed of two ATP-binding proteins (TagH) and two transmembrane proteins (TagG).</text>
</comment>
<comment type="subcellular location">
    <subcellularLocation>
        <location evidence="1">Cell membrane</location>
        <topology evidence="1">Peripheral membrane protein</topology>
    </subcellularLocation>
</comment>
<comment type="similarity">
    <text evidence="1">Belongs to the ABC transporter superfamily. Teichoic acids exporter (TC 3.A.1.104.1) family.</text>
</comment>
<keyword id="KW-0067">ATP-binding</keyword>
<keyword id="KW-1003">Cell membrane</keyword>
<keyword id="KW-0472">Membrane</keyword>
<keyword id="KW-0547">Nucleotide-binding</keyword>
<keyword id="KW-1185">Reference proteome</keyword>
<keyword id="KW-1278">Translocase</keyword>
<keyword id="KW-0813">Transport</keyword>
<gene>
    <name evidence="1" type="primary">tagH</name>
    <name type="ordered locus">BLi03814</name>
    <name type="ordered locus">BL02460</name>
</gene>
<evidence type="ECO:0000255" key="1">
    <source>
        <dbReference type="HAMAP-Rule" id="MF_01715"/>
    </source>
</evidence>
<evidence type="ECO:0000305" key="2"/>
<feature type="chain" id="PRO_0000092986" description="Teichoic acids export ATP-binding protein TagH">
    <location>
        <begin position="1"/>
        <end position="303"/>
    </location>
</feature>
<feature type="domain" description="ABC transporter" evidence="1">
    <location>
        <begin position="5"/>
        <end position="242"/>
    </location>
</feature>
<feature type="binding site" evidence="1">
    <location>
        <begin position="56"/>
        <end position="63"/>
    </location>
    <ligand>
        <name>ATP</name>
        <dbReference type="ChEBI" id="CHEBI:30616"/>
    </ligand>
</feature>
<feature type="sequence conflict" description="In Ref. 2; AAU25257." evidence="2" ref="2">
    <original>N</original>
    <variation>S</variation>
    <location>
        <position position="104"/>
    </location>
</feature>
<accession>Q65E84</accession>
<accession>Q62PQ4</accession>
<name>TAGH_BACLD</name>
<organism>
    <name type="scientific">Bacillus licheniformis (strain ATCC 14580 / DSM 13 / JCM 2505 / CCUG 7422 / NBRC 12200 / NCIMB 9375 / NCTC 10341 / NRRL NRS-1264 / Gibson 46)</name>
    <dbReference type="NCBI Taxonomy" id="279010"/>
    <lineage>
        <taxon>Bacteria</taxon>
        <taxon>Bacillati</taxon>
        <taxon>Bacillota</taxon>
        <taxon>Bacilli</taxon>
        <taxon>Bacillales</taxon>
        <taxon>Bacillaceae</taxon>
        <taxon>Bacillus</taxon>
    </lineage>
</organism>
<reference key="1">
    <citation type="journal article" date="2004" name="J. Mol. Microbiol. Biotechnol.">
        <title>The complete genome sequence of Bacillus licheniformis DSM13, an organism with great industrial potential.</title>
        <authorList>
            <person name="Veith B."/>
            <person name="Herzberg C."/>
            <person name="Steckel S."/>
            <person name="Feesche J."/>
            <person name="Maurer K.H."/>
            <person name="Ehrenreich P."/>
            <person name="Baeumer S."/>
            <person name="Henne A."/>
            <person name="Liesegang H."/>
            <person name="Merkl R."/>
            <person name="Ehrenreich A."/>
            <person name="Gottschalk G."/>
        </authorList>
    </citation>
    <scope>NUCLEOTIDE SEQUENCE [LARGE SCALE GENOMIC DNA]</scope>
    <source>
        <strain>ATCC 14580 / DSM 13 / JCM 2505 / CCUG 7422 / NBRC 12200 / NCIMB 9375 / NCTC 10341 / NRRL NRS-1264 / Gibson 46</strain>
    </source>
</reference>
<reference key="2">
    <citation type="journal article" date="2004" name="Genome Biol.">
        <title>Complete genome sequence of the industrial bacterium Bacillus licheniformis and comparisons with closely related Bacillus species.</title>
        <authorList>
            <person name="Rey M.W."/>
            <person name="Ramaiya P."/>
            <person name="Nelson B.A."/>
            <person name="Brody-Karpin S.D."/>
            <person name="Zaretsky E.J."/>
            <person name="Tang M."/>
            <person name="Lopez de Leon A."/>
            <person name="Xiang H."/>
            <person name="Gusti V."/>
            <person name="Clausen I.G."/>
            <person name="Olsen P.B."/>
            <person name="Rasmussen M.D."/>
            <person name="Andersen J.T."/>
            <person name="Joergensen P.L."/>
            <person name="Larsen T.S."/>
            <person name="Sorokin A."/>
            <person name="Bolotin A."/>
            <person name="Lapidus A."/>
            <person name="Galleron N."/>
            <person name="Ehrlich S.D."/>
            <person name="Berka R.M."/>
        </authorList>
    </citation>
    <scope>NUCLEOTIDE SEQUENCE [LARGE SCALE GENOMIC DNA]</scope>
    <source>
        <strain>ATCC 14580 / DSM 13 / JCM 2505 / CCUG 7422 / NBRC 12200 / NCIMB 9375 / NCTC 10341 / NRRL NRS-1264 / Gibson 46</strain>
    </source>
</reference>
<dbReference type="EC" id="7.5.2.4" evidence="1"/>
<dbReference type="EMBL" id="AE017333">
    <property type="protein sequence ID" value="AAU42630.1"/>
    <property type="molecule type" value="Genomic_DNA"/>
</dbReference>
<dbReference type="EMBL" id="CP000002">
    <property type="protein sequence ID" value="AAU25257.1"/>
    <property type="molecule type" value="Genomic_DNA"/>
</dbReference>
<dbReference type="SMR" id="Q65E84"/>
<dbReference type="STRING" id="279010.BL02460"/>
<dbReference type="KEGG" id="bld:BLi03814"/>
<dbReference type="KEGG" id="bli:BL02460"/>
<dbReference type="PATRIC" id="fig|279010.13.peg.3881"/>
<dbReference type="eggNOG" id="COG1134">
    <property type="taxonomic scope" value="Bacteria"/>
</dbReference>
<dbReference type="HOGENOM" id="CLU_000604_1_2_9"/>
<dbReference type="Proteomes" id="UP000000606">
    <property type="component" value="Chromosome"/>
</dbReference>
<dbReference type="GO" id="GO:0005886">
    <property type="term" value="C:plasma membrane"/>
    <property type="evidence" value="ECO:0007669"/>
    <property type="project" value="UniProtKB-SubCell"/>
</dbReference>
<dbReference type="GO" id="GO:0015438">
    <property type="term" value="F:ABC-type teichoic acid transporter activity"/>
    <property type="evidence" value="ECO:0007669"/>
    <property type="project" value="UniProtKB-EC"/>
</dbReference>
<dbReference type="GO" id="GO:0005524">
    <property type="term" value="F:ATP binding"/>
    <property type="evidence" value="ECO:0007669"/>
    <property type="project" value="UniProtKB-KW"/>
</dbReference>
<dbReference type="GO" id="GO:0016887">
    <property type="term" value="F:ATP hydrolysis activity"/>
    <property type="evidence" value="ECO:0007669"/>
    <property type="project" value="InterPro"/>
</dbReference>
<dbReference type="CDD" id="cd03220">
    <property type="entry name" value="ABC_KpsT_Wzt"/>
    <property type="match status" value="1"/>
</dbReference>
<dbReference type="FunFam" id="3.40.50.300:FF:003010">
    <property type="entry name" value="Teichoic acids export ATP-binding protein TagH"/>
    <property type="match status" value="1"/>
</dbReference>
<dbReference type="Gene3D" id="3.40.50.300">
    <property type="entry name" value="P-loop containing nucleotide triphosphate hydrolases"/>
    <property type="match status" value="1"/>
</dbReference>
<dbReference type="InterPro" id="IPR003593">
    <property type="entry name" value="AAA+_ATPase"/>
</dbReference>
<dbReference type="InterPro" id="IPR003439">
    <property type="entry name" value="ABC_transporter-like_ATP-bd"/>
</dbReference>
<dbReference type="InterPro" id="IPR017871">
    <property type="entry name" value="ABC_transporter-like_CS"/>
</dbReference>
<dbReference type="InterPro" id="IPR015860">
    <property type="entry name" value="ABC_transpr_TagH-like"/>
</dbReference>
<dbReference type="InterPro" id="IPR050683">
    <property type="entry name" value="Bact_Polysacc_Export_ATP-bd"/>
</dbReference>
<dbReference type="InterPro" id="IPR027417">
    <property type="entry name" value="P-loop_NTPase"/>
</dbReference>
<dbReference type="NCBIfam" id="NF010066">
    <property type="entry name" value="PRK13546.1"/>
    <property type="match status" value="1"/>
</dbReference>
<dbReference type="PANTHER" id="PTHR46743">
    <property type="entry name" value="TEICHOIC ACIDS EXPORT ATP-BINDING PROTEIN TAGH"/>
    <property type="match status" value="1"/>
</dbReference>
<dbReference type="PANTHER" id="PTHR46743:SF2">
    <property type="entry name" value="TEICHOIC ACIDS EXPORT ATP-BINDING PROTEIN TAGH"/>
    <property type="match status" value="1"/>
</dbReference>
<dbReference type="Pfam" id="PF00005">
    <property type="entry name" value="ABC_tran"/>
    <property type="match status" value="1"/>
</dbReference>
<dbReference type="SMART" id="SM00382">
    <property type="entry name" value="AAA"/>
    <property type="match status" value="1"/>
</dbReference>
<dbReference type="SUPFAM" id="SSF52540">
    <property type="entry name" value="P-loop containing nucleoside triphosphate hydrolases"/>
    <property type="match status" value="1"/>
</dbReference>
<dbReference type="PROSITE" id="PS00211">
    <property type="entry name" value="ABC_TRANSPORTER_1"/>
    <property type="match status" value="1"/>
</dbReference>
<dbReference type="PROSITE" id="PS50893">
    <property type="entry name" value="ABC_TRANSPORTER_2"/>
    <property type="match status" value="1"/>
</dbReference>
<dbReference type="PROSITE" id="PS51251">
    <property type="entry name" value="TAGH"/>
    <property type="match status" value="1"/>
</dbReference>
<sequence length="303" mass="34113">MKLKVSFRNVSKQYQLYEKQSDKIKGLFFPNKDKGFFAVRNVSFDVYEGETIGFVGINGSGKSTMSNLLAKIIPPTSGEIEMNGQPSLIAISAGLNNALTGRDNIRLKCLMMGLTNKEIDEMYDSIVEFAEIGEFINQPVKSYSSGMKSRLGFAISVHIDPDILIIDEALSVGDQTFYDKCVDRITEFKNQGKTIFFVSHSIGQIEKICDRVAWIDNGELRMFDDTKTVVKEYKEFISWFKKLSKKEKDKYKKEQLASRKQVLSEEDLAHLEKDKNKQKSLANIIPIAGLSILVVLAAGAMFV</sequence>
<proteinExistence type="inferred from homology"/>